<comment type="function">
    <text evidence="2">IF-3 binds to the 30S ribosomal subunit and shifts the equilibrium between 70S ribosomes and their 50S and 30S subunits in favor of the free subunits, thus enhancing the availability of 30S subunits on which protein synthesis initiation begins.</text>
</comment>
<comment type="subunit">
    <text evidence="2">Monomer.</text>
</comment>
<comment type="subcellular location">
    <subcellularLocation>
        <location evidence="2">Cytoplasm</location>
    </subcellularLocation>
</comment>
<comment type="similarity">
    <text evidence="2">Belongs to the IF-3 family.</text>
</comment>
<organism>
    <name type="scientific">Klebsiella pneumoniae</name>
    <dbReference type="NCBI Taxonomy" id="573"/>
    <lineage>
        <taxon>Bacteria</taxon>
        <taxon>Pseudomonadati</taxon>
        <taxon>Pseudomonadota</taxon>
        <taxon>Gammaproteobacteria</taxon>
        <taxon>Enterobacterales</taxon>
        <taxon>Enterobacteriaceae</taxon>
        <taxon>Klebsiella/Raoultella group</taxon>
        <taxon>Klebsiella</taxon>
        <taxon>Klebsiella pneumoniae complex</taxon>
    </lineage>
</organism>
<gene>
    <name evidence="2" type="primary">infC</name>
</gene>
<dbReference type="EMBL" id="L11255">
    <property type="protein sequence ID" value="AAC36811.1"/>
    <property type="molecule type" value="Unassigned_DNA"/>
</dbReference>
<dbReference type="SMR" id="P33318"/>
<dbReference type="GO" id="GO:0005829">
    <property type="term" value="C:cytosol"/>
    <property type="evidence" value="ECO:0007669"/>
    <property type="project" value="TreeGrafter"/>
</dbReference>
<dbReference type="GO" id="GO:0016020">
    <property type="term" value="C:membrane"/>
    <property type="evidence" value="ECO:0007669"/>
    <property type="project" value="TreeGrafter"/>
</dbReference>
<dbReference type="GO" id="GO:0043022">
    <property type="term" value="F:ribosome binding"/>
    <property type="evidence" value="ECO:0007669"/>
    <property type="project" value="TreeGrafter"/>
</dbReference>
<dbReference type="GO" id="GO:0003743">
    <property type="term" value="F:translation initiation factor activity"/>
    <property type="evidence" value="ECO:0007669"/>
    <property type="project" value="UniProtKB-UniRule"/>
</dbReference>
<dbReference type="GO" id="GO:0032790">
    <property type="term" value="P:ribosome disassembly"/>
    <property type="evidence" value="ECO:0007669"/>
    <property type="project" value="TreeGrafter"/>
</dbReference>
<dbReference type="FunFam" id="3.10.20.80:FF:000001">
    <property type="entry name" value="Translation initiation factor IF-3"/>
    <property type="match status" value="1"/>
</dbReference>
<dbReference type="FunFam" id="3.30.110.10:FF:000001">
    <property type="entry name" value="Translation initiation factor IF-3"/>
    <property type="match status" value="1"/>
</dbReference>
<dbReference type="Gene3D" id="3.30.110.10">
    <property type="entry name" value="Translation initiation factor 3 (IF-3), C-terminal domain"/>
    <property type="match status" value="1"/>
</dbReference>
<dbReference type="Gene3D" id="3.10.20.80">
    <property type="entry name" value="Translation initiation factor 3 (IF-3), N-terminal domain"/>
    <property type="match status" value="1"/>
</dbReference>
<dbReference type="HAMAP" id="MF_00080">
    <property type="entry name" value="IF_3"/>
    <property type="match status" value="1"/>
</dbReference>
<dbReference type="InterPro" id="IPR036788">
    <property type="entry name" value="T_IF-3_C_sf"/>
</dbReference>
<dbReference type="InterPro" id="IPR036787">
    <property type="entry name" value="T_IF-3_N_sf"/>
</dbReference>
<dbReference type="InterPro" id="IPR019813">
    <property type="entry name" value="Translation_initiation_fac3_CS"/>
</dbReference>
<dbReference type="InterPro" id="IPR001288">
    <property type="entry name" value="Translation_initiation_fac_3"/>
</dbReference>
<dbReference type="InterPro" id="IPR019815">
    <property type="entry name" value="Translation_initiation_fac_3_C"/>
</dbReference>
<dbReference type="InterPro" id="IPR019814">
    <property type="entry name" value="Translation_initiation_fac_3_N"/>
</dbReference>
<dbReference type="NCBIfam" id="TIGR00168">
    <property type="entry name" value="infC"/>
    <property type="match status" value="1"/>
</dbReference>
<dbReference type="PANTHER" id="PTHR10938">
    <property type="entry name" value="TRANSLATION INITIATION FACTOR IF-3"/>
    <property type="match status" value="1"/>
</dbReference>
<dbReference type="PANTHER" id="PTHR10938:SF0">
    <property type="entry name" value="TRANSLATION INITIATION FACTOR IF-3, MITOCHONDRIAL"/>
    <property type="match status" value="1"/>
</dbReference>
<dbReference type="Pfam" id="PF00707">
    <property type="entry name" value="IF3_C"/>
    <property type="match status" value="1"/>
</dbReference>
<dbReference type="Pfam" id="PF05198">
    <property type="entry name" value="IF3_N"/>
    <property type="match status" value="1"/>
</dbReference>
<dbReference type="SUPFAM" id="SSF55200">
    <property type="entry name" value="Translation initiation factor IF3, C-terminal domain"/>
    <property type="match status" value="1"/>
</dbReference>
<dbReference type="SUPFAM" id="SSF54364">
    <property type="entry name" value="Translation initiation factor IF3, N-terminal domain"/>
    <property type="match status" value="1"/>
</dbReference>
<dbReference type="PROSITE" id="PS00938">
    <property type="entry name" value="IF3"/>
    <property type="match status" value="1"/>
</dbReference>
<protein>
    <recommendedName>
        <fullName evidence="2">Translation initiation factor IF-3</fullName>
    </recommendedName>
</protein>
<accession>P33318</accession>
<name>IF3_KLEPN</name>
<sequence>MKGGKRVQTARPNRINGEIRAQEVRLTGLEGEQLGIVSLREAIEKAEEAGVDLVEISPNAEPPVCRIMDYGKFLYEKSKSSKEQKKKQKVIQVKEIKFRPGTDEGDYQVKLRSLIRFLEDGDKAKITLRFRGREMAHQQIGMEVLNRVKDDLVELAVVEAFPTKIEGRQMIMVLAPKKKQ</sequence>
<reference key="1">
    <citation type="journal article" date="1993" name="FEMS Microbiol. Lett.">
        <title>Molecular cloning and sequencing of infC, the gene encoding translation initiation factor IF3, from four enterobacterial species.</title>
        <authorList>
            <person name="Liveris D."/>
            <person name="Schwartz J.J."/>
            <person name="Geertman R."/>
            <person name="Schwartz I."/>
        </authorList>
    </citation>
    <scope>NUCLEOTIDE SEQUENCE [GENOMIC DNA]</scope>
    <source>
        <strain>ATCC 13883 / DSM 30104 / JCM 1662 / NBRC 14940 / NCIMB 13281 / NCTC 9633</strain>
    </source>
</reference>
<proteinExistence type="inferred from homology"/>
<evidence type="ECO:0000250" key="1"/>
<evidence type="ECO:0000255" key="2">
    <source>
        <dbReference type="HAMAP-Rule" id="MF_00080"/>
    </source>
</evidence>
<feature type="chain" id="PRO_0000177528" description="Translation initiation factor IF-3">
    <location>
        <begin position="1"/>
        <end position="180"/>
    </location>
</feature>
<feature type="site" description="Important for 30S binding" evidence="1">
    <location>
        <position position="107"/>
    </location>
</feature>
<feature type="site" description="Important for 30S binding" evidence="1">
    <location>
        <position position="110"/>
    </location>
</feature>
<keyword id="KW-0963">Cytoplasm</keyword>
<keyword id="KW-0396">Initiation factor</keyword>
<keyword id="KW-0648">Protein biosynthesis</keyword>